<keyword id="KW-0472">Membrane</keyword>
<keyword id="KW-0602">Photosynthesis</keyword>
<keyword id="KW-1185">Reference proteome</keyword>
<keyword id="KW-0677">Repeat</keyword>
<keyword id="KW-0793">Thylakoid</keyword>
<keyword id="KW-0802">TPR repeat</keyword>
<organism>
    <name type="scientific">Synechococcus elongatus (strain ATCC 33912 / PCC 7942 / FACHB-805)</name>
    <name type="common">Anacystis nidulans R2</name>
    <dbReference type="NCBI Taxonomy" id="1140"/>
    <lineage>
        <taxon>Bacteria</taxon>
        <taxon>Bacillati</taxon>
        <taxon>Cyanobacteriota</taxon>
        <taxon>Cyanophyceae</taxon>
        <taxon>Synechococcales</taxon>
        <taxon>Synechococcaceae</taxon>
        <taxon>Synechococcus</taxon>
    </lineage>
</organism>
<name>YCF3_SYNE7</name>
<gene>
    <name evidence="1" type="primary">ycf3</name>
    <name type="ordered locus">Synpcc7942_2321</name>
</gene>
<feature type="chain" id="PRO_1000025971" description="Photosystem I assembly protein Ycf3">
    <location>
        <begin position="1"/>
        <end position="173"/>
    </location>
</feature>
<feature type="repeat" description="TPR 1">
    <location>
        <begin position="35"/>
        <end position="68"/>
    </location>
</feature>
<feature type="repeat" description="TPR 2">
    <location>
        <begin position="72"/>
        <end position="105"/>
    </location>
</feature>
<feature type="repeat" description="TPR 3">
    <location>
        <begin position="120"/>
        <end position="153"/>
    </location>
</feature>
<reference key="1">
    <citation type="submission" date="2005-08" db="EMBL/GenBank/DDBJ databases">
        <title>Complete sequence of chromosome 1 of Synechococcus elongatus PCC 7942.</title>
        <authorList>
            <consortium name="US DOE Joint Genome Institute"/>
            <person name="Copeland A."/>
            <person name="Lucas S."/>
            <person name="Lapidus A."/>
            <person name="Barry K."/>
            <person name="Detter J.C."/>
            <person name="Glavina T."/>
            <person name="Hammon N."/>
            <person name="Israni S."/>
            <person name="Pitluck S."/>
            <person name="Schmutz J."/>
            <person name="Larimer F."/>
            <person name="Land M."/>
            <person name="Kyrpides N."/>
            <person name="Lykidis A."/>
            <person name="Golden S."/>
            <person name="Richardson P."/>
        </authorList>
    </citation>
    <scope>NUCLEOTIDE SEQUENCE [LARGE SCALE GENOMIC DNA]</scope>
    <source>
        <strain>ATCC 33912 / PCC 7942 / FACHB-805</strain>
    </source>
</reference>
<protein>
    <recommendedName>
        <fullName evidence="1">Photosystem I assembly protein Ycf3</fullName>
    </recommendedName>
</protein>
<evidence type="ECO:0000255" key="1">
    <source>
        <dbReference type="HAMAP-Rule" id="MF_00439"/>
    </source>
</evidence>
<dbReference type="EMBL" id="CP000100">
    <property type="protein sequence ID" value="ABB58351.1"/>
    <property type="molecule type" value="Genomic_DNA"/>
</dbReference>
<dbReference type="RefSeq" id="WP_011244091.1">
    <property type="nucleotide sequence ID" value="NZ_JACJTX010000001.1"/>
</dbReference>
<dbReference type="SMR" id="Q31KR8"/>
<dbReference type="STRING" id="1140.Synpcc7942_2321"/>
<dbReference type="PaxDb" id="1140-Synpcc7942_2321"/>
<dbReference type="KEGG" id="syf:Synpcc7942_2321"/>
<dbReference type="eggNOG" id="COG0457">
    <property type="taxonomic scope" value="Bacteria"/>
</dbReference>
<dbReference type="HOGENOM" id="CLU_141248_0_0_3"/>
<dbReference type="OrthoDB" id="9429505at2"/>
<dbReference type="BioCyc" id="SYNEL:SYNPCC7942_2321-MONOMER"/>
<dbReference type="Proteomes" id="UP000889800">
    <property type="component" value="Chromosome"/>
</dbReference>
<dbReference type="GO" id="GO:0031676">
    <property type="term" value="C:plasma membrane-derived thylakoid membrane"/>
    <property type="evidence" value="ECO:0007669"/>
    <property type="project" value="UniProtKB-SubCell"/>
</dbReference>
<dbReference type="GO" id="GO:0015979">
    <property type="term" value="P:photosynthesis"/>
    <property type="evidence" value="ECO:0007669"/>
    <property type="project" value="UniProtKB-UniRule"/>
</dbReference>
<dbReference type="Gene3D" id="1.25.40.10">
    <property type="entry name" value="Tetratricopeptide repeat domain"/>
    <property type="match status" value="1"/>
</dbReference>
<dbReference type="HAMAP" id="MF_00439">
    <property type="entry name" value="Ycf3"/>
    <property type="match status" value="1"/>
</dbReference>
<dbReference type="InterPro" id="IPR022818">
    <property type="entry name" value="PSI_Ycf3_assembly"/>
</dbReference>
<dbReference type="InterPro" id="IPR011990">
    <property type="entry name" value="TPR-like_helical_dom_sf"/>
</dbReference>
<dbReference type="InterPro" id="IPR019734">
    <property type="entry name" value="TPR_rpt"/>
</dbReference>
<dbReference type="InterPro" id="IPR051685">
    <property type="entry name" value="Ycf3/AcsC/BcsC/TPR_MFPF"/>
</dbReference>
<dbReference type="NCBIfam" id="NF002725">
    <property type="entry name" value="PRK02603.1"/>
    <property type="match status" value="1"/>
</dbReference>
<dbReference type="PANTHER" id="PTHR44943">
    <property type="entry name" value="CELLULOSE SYNTHASE OPERON PROTEIN C"/>
    <property type="match status" value="1"/>
</dbReference>
<dbReference type="PANTHER" id="PTHR44943:SF8">
    <property type="entry name" value="TPR REPEAT-CONTAINING PROTEIN MJ0263"/>
    <property type="match status" value="1"/>
</dbReference>
<dbReference type="Pfam" id="PF13424">
    <property type="entry name" value="TPR_12"/>
    <property type="match status" value="1"/>
</dbReference>
<dbReference type="SMART" id="SM00028">
    <property type="entry name" value="TPR"/>
    <property type="match status" value="3"/>
</dbReference>
<dbReference type="SUPFAM" id="SSF48452">
    <property type="entry name" value="TPR-like"/>
    <property type="match status" value="1"/>
</dbReference>
<dbReference type="PROSITE" id="PS50005">
    <property type="entry name" value="TPR"/>
    <property type="match status" value="3"/>
</dbReference>
<dbReference type="PROSITE" id="PS50293">
    <property type="entry name" value="TPR_REGION"/>
    <property type="match status" value="1"/>
</dbReference>
<sequence length="173" mass="19872">MPRTQRNDNFIDKSFTVMADLILKVLPTNKKSKEAFAYYRDGMSAQADGEYAEALENYQEALTLEEDPIDRSFILYNIALVHTSNGDHQTALDHYLQALDLNPKMPQALNNIAVIHHFLGQRSEEAGNDDEAERHYDQAAEYWTQAIRLAPNNYIEAQNWLKTTGRSKVDVYF</sequence>
<comment type="function">
    <text evidence="1">Essential for the assembly of the photosystem I (PSI) complex. May act as a chaperone-like factor to guide the assembly of the PSI subunits.</text>
</comment>
<comment type="subcellular location">
    <subcellularLocation>
        <location evidence="1">Cellular thylakoid membrane</location>
        <topology evidence="1">Peripheral membrane protein</topology>
    </subcellularLocation>
</comment>
<comment type="similarity">
    <text evidence="1">Belongs to the Ycf3 family.</text>
</comment>
<accession>Q31KR8</accession>
<proteinExistence type="inferred from homology"/>